<accession>A5DDB7</accession>
<organism>
    <name type="scientific">Meyerozyma guilliermondii (strain ATCC 6260 / CBS 566 / DSM 6381 / JCM 1539 / NBRC 10279 / NRRL Y-324)</name>
    <name type="common">Yeast</name>
    <name type="synonym">Candida guilliermondii</name>
    <dbReference type="NCBI Taxonomy" id="294746"/>
    <lineage>
        <taxon>Eukaryota</taxon>
        <taxon>Fungi</taxon>
        <taxon>Dikarya</taxon>
        <taxon>Ascomycota</taxon>
        <taxon>Saccharomycotina</taxon>
        <taxon>Pichiomycetes</taxon>
        <taxon>Debaryomycetaceae</taxon>
        <taxon>Meyerozyma</taxon>
    </lineage>
</organism>
<sequence length="752" mass="84699">MQPRKSARSNKGQHSQWSLQDVLRQEQDDDVNSEPRRKKSKVESDSDDVYDDAGEVANASSENDDDDDDDNNNDKNEEDGEVRCTPCGANKDNYDEETDEGGTMIECDKCHTWQHAKCMGYRNERSIPKKYMCNLCQESKSETKKKPEKEQTTPGYSFTLRDKTRISVAKAFFGVFHKNIPPASLPDGIDAVMMATKWAQELEAEVFKVFPSKDKHYTDKSRGLMVLIKKENVMRRISTGELSFYDLVNSSPEEIDEDLKVYAEKVRQESIRRSVLTVDEGSQRIRRTHKGEEIVEDANRQSEEADVNVVPRNIDHRRIKEDSPPREIITNSESQTYYHNEEDDDDDEQAEADGEESNKDDVNEDSSDSDDDELDMILKDKKDENKEEVEVRQQPAKPAPVPAKKPSFEKESAEVWKGEIVFPDFASFSAVAELKSCTNYVEPSDSQTARNFSRFIKVGKELLSRKKHEVEGRLDKNRADDYLNKVVSSRDFYLIEIKPTANHPDYDKLYGYLLDREKVGVLSGKPSFAKDSYLITLEKSRPLPPYLSTLKGFEQSTGLFALYVVRKGYVPAAPSILKNRSSYNVPAPIPPTNSNHHSKPMLPQPPAMAAKPKTPLLDSILSTLGGAQANPVPKPQPIPQQNHQFQQPHFQHQPSGAYNRVPSLPGKPNLPSKPTFGSNASNAPNYNKQHQTSDLNLSGDQMRYLQELVKNNPQQARHEPQALVGMAANSGASFGGSGLPAGDDDDEFPTYN</sequence>
<feature type="chain" id="PRO_0000324850" description="Transcription factor BYE1">
    <location>
        <begin position="1"/>
        <end position="752"/>
    </location>
</feature>
<feature type="domain" description="TFIIS central" evidence="3">
    <location>
        <begin position="160"/>
        <end position="283"/>
    </location>
</feature>
<feature type="zinc finger region" description="PHD-type" evidence="2">
    <location>
        <begin position="81"/>
        <end position="139"/>
    </location>
</feature>
<feature type="region of interest" description="Disordered" evidence="4">
    <location>
        <begin position="1"/>
        <end position="99"/>
    </location>
</feature>
<feature type="region of interest" description="Disordered" evidence="4">
    <location>
        <begin position="289"/>
        <end position="408"/>
    </location>
</feature>
<feature type="region of interest" description="Disordered" evidence="4">
    <location>
        <begin position="625"/>
        <end position="693"/>
    </location>
</feature>
<feature type="region of interest" description="Disordered" evidence="4">
    <location>
        <begin position="710"/>
        <end position="752"/>
    </location>
</feature>
<feature type="compositionally biased region" description="Polar residues" evidence="4">
    <location>
        <begin position="9"/>
        <end position="19"/>
    </location>
</feature>
<feature type="compositionally biased region" description="Acidic residues" evidence="4">
    <location>
        <begin position="45"/>
        <end position="54"/>
    </location>
</feature>
<feature type="compositionally biased region" description="Acidic residues" evidence="4">
    <location>
        <begin position="62"/>
        <end position="80"/>
    </location>
</feature>
<feature type="compositionally biased region" description="Basic and acidic residues" evidence="4">
    <location>
        <begin position="290"/>
        <end position="303"/>
    </location>
</feature>
<feature type="compositionally biased region" description="Basic and acidic residues" evidence="4">
    <location>
        <begin position="313"/>
        <end position="325"/>
    </location>
</feature>
<feature type="compositionally biased region" description="Polar residues" evidence="4">
    <location>
        <begin position="329"/>
        <end position="338"/>
    </location>
</feature>
<feature type="compositionally biased region" description="Acidic residues" evidence="4">
    <location>
        <begin position="341"/>
        <end position="355"/>
    </location>
</feature>
<feature type="compositionally biased region" description="Acidic residues" evidence="4">
    <location>
        <begin position="362"/>
        <end position="375"/>
    </location>
</feature>
<feature type="compositionally biased region" description="Basic and acidic residues" evidence="4">
    <location>
        <begin position="376"/>
        <end position="391"/>
    </location>
</feature>
<feature type="compositionally biased region" description="Low complexity" evidence="4">
    <location>
        <begin position="639"/>
        <end position="654"/>
    </location>
</feature>
<feature type="compositionally biased region" description="Polar residues" evidence="4">
    <location>
        <begin position="675"/>
        <end position="693"/>
    </location>
</feature>
<feature type="compositionally biased region" description="Acidic residues" evidence="4">
    <location>
        <begin position="742"/>
        <end position="752"/>
    </location>
</feature>
<gene>
    <name type="primary">BYE1</name>
    <name type="ORF">PGUG_01268</name>
</gene>
<proteinExistence type="inferred from homology"/>
<dbReference type="EMBL" id="CH408156">
    <property type="protein sequence ID" value="EDK37170.2"/>
    <property type="molecule type" value="Genomic_DNA"/>
</dbReference>
<dbReference type="RefSeq" id="XP_001485597.1">
    <property type="nucleotide sequence ID" value="XM_001485547.1"/>
</dbReference>
<dbReference type="SMR" id="A5DDB7"/>
<dbReference type="STRING" id="294746.A5DDB7"/>
<dbReference type="GeneID" id="5127740"/>
<dbReference type="KEGG" id="pgu:PGUG_01268"/>
<dbReference type="VEuPathDB" id="FungiDB:PGUG_01268"/>
<dbReference type="eggNOG" id="KOG1634">
    <property type="taxonomic scope" value="Eukaryota"/>
</dbReference>
<dbReference type="HOGENOM" id="CLU_370099_0_0_1"/>
<dbReference type="InParanoid" id="A5DDB7"/>
<dbReference type="OMA" id="RTHKGDI"/>
<dbReference type="OrthoDB" id="79252at2759"/>
<dbReference type="Proteomes" id="UP000001997">
    <property type="component" value="Unassembled WGS sequence"/>
</dbReference>
<dbReference type="GO" id="GO:0005634">
    <property type="term" value="C:nucleus"/>
    <property type="evidence" value="ECO:0007669"/>
    <property type="project" value="UniProtKB-SubCell"/>
</dbReference>
<dbReference type="GO" id="GO:0001139">
    <property type="term" value="F:RNA polymerase II complex recruiting activity"/>
    <property type="evidence" value="ECO:0007669"/>
    <property type="project" value="TreeGrafter"/>
</dbReference>
<dbReference type="GO" id="GO:0000977">
    <property type="term" value="F:RNA polymerase II transcription regulatory region sequence-specific DNA binding"/>
    <property type="evidence" value="ECO:0007669"/>
    <property type="project" value="TreeGrafter"/>
</dbReference>
<dbReference type="GO" id="GO:0008270">
    <property type="term" value="F:zinc ion binding"/>
    <property type="evidence" value="ECO:0007669"/>
    <property type="project" value="UniProtKB-KW"/>
</dbReference>
<dbReference type="GO" id="GO:0031440">
    <property type="term" value="P:regulation of mRNA 3'-end processing"/>
    <property type="evidence" value="ECO:0007669"/>
    <property type="project" value="TreeGrafter"/>
</dbReference>
<dbReference type="GO" id="GO:0031564">
    <property type="term" value="P:transcription antitermination"/>
    <property type="evidence" value="ECO:0007669"/>
    <property type="project" value="TreeGrafter"/>
</dbReference>
<dbReference type="GO" id="GO:0006362">
    <property type="term" value="P:transcription elongation by RNA polymerase I"/>
    <property type="evidence" value="ECO:0007669"/>
    <property type="project" value="TreeGrafter"/>
</dbReference>
<dbReference type="GO" id="GO:0006368">
    <property type="term" value="P:transcription elongation by RNA polymerase II"/>
    <property type="evidence" value="ECO:0007669"/>
    <property type="project" value="TreeGrafter"/>
</dbReference>
<dbReference type="CDD" id="cd21542">
    <property type="entry name" value="SPOC_Bye1p-like"/>
    <property type="match status" value="1"/>
</dbReference>
<dbReference type="Gene3D" id="1.10.472.30">
    <property type="entry name" value="Transcription elongation factor S-II, central domain"/>
    <property type="match status" value="1"/>
</dbReference>
<dbReference type="Gene3D" id="3.30.40.10">
    <property type="entry name" value="Zinc/RING finger domain, C3HC4 (zinc finger)"/>
    <property type="match status" value="1"/>
</dbReference>
<dbReference type="InterPro" id="IPR012921">
    <property type="entry name" value="SPOC_C"/>
</dbReference>
<dbReference type="InterPro" id="IPR003618">
    <property type="entry name" value="TFIIS_cen_dom"/>
</dbReference>
<dbReference type="InterPro" id="IPR036575">
    <property type="entry name" value="TFIIS_cen_dom_sf"/>
</dbReference>
<dbReference type="InterPro" id="IPR019786">
    <property type="entry name" value="Zinc_finger_PHD-type_CS"/>
</dbReference>
<dbReference type="InterPro" id="IPR011011">
    <property type="entry name" value="Znf_FYVE_PHD"/>
</dbReference>
<dbReference type="InterPro" id="IPR001965">
    <property type="entry name" value="Znf_PHD"/>
</dbReference>
<dbReference type="InterPro" id="IPR019787">
    <property type="entry name" value="Znf_PHD-finger"/>
</dbReference>
<dbReference type="InterPro" id="IPR013083">
    <property type="entry name" value="Znf_RING/FYVE/PHD"/>
</dbReference>
<dbReference type="PANTHER" id="PTHR11477:SF11">
    <property type="entry name" value="TRANSCRIPTION FACTOR BYE1"/>
    <property type="match status" value="1"/>
</dbReference>
<dbReference type="PANTHER" id="PTHR11477">
    <property type="entry name" value="TRANSCRIPTION FACTOR S-II ZINC FINGER DOMAIN-CONTAINING PROTEIN"/>
    <property type="match status" value="1"/>
</dbReference>
<dbReference type="Pfam" id="PF20826">
    <property type="entry name" value="PHD_5"/>
    <property type="match status" value="1"/>
</dbReference>
<dbReference type="Pfam" id="PF07744">
    <property type="entry name" value="SPOC"/>
    <property type="match status" value="1"/>
</dbReference>
<dbReference type="Pfam" id="PF07500">
    <property type="entry name" value="TFIIS_M"/>
    <property type="match status" value="1"/>
</dbReference>
<dbReference type="SMART" id="SM00249">
    <property type="entry name" value="PHD"/>
    <property type="match status" value="1"/>
</dbReference>
<dbReference type="SMART" id="SM00510">
    <property type="entry name" value="TFS2M"/>
    <property type="match status" value="1"/>
</dbReference>
<dbReference type="SUPFAM" id="SSF46942">
    <property type="entry name" value="Elongation factor TFIIS domain 2"/>
    <property type="match status" value="1"/>
</dbReference>
<dbReference type="SUPFAM" id="SSF57903">
    <property type="entry name" value="FYVE/PHD zinc finger"/>
    <property type="match status" value="1"/>
</dbReference>
<dbReference type="PROSITE" id="PS51321">
    <property type="entry name" value="TFIIS_CENTRAL"/>
    <property type="match status" value="1"/>
</dbReference>
<dbReference type="PROSITE" id="PS01359">
    <property type="entry name" value="ZF_PHD_1"/>
    <property type="match status" value="1"/>
</dbReference>
<dbReference type="PROSITE" id="PS50016">
    <property type="entry name" value="ZF_PHD_2"/>
    <property type="match status" value="1"/>
</dbReference>
<name>BYE1_PICGU</name>
<keyword id="KW-0479">Metal-binding</keyword>
<keyword id="KW-0539">Nucleus</keyword>
<keyword id="KW-1185">Reference proteome</keyword>
<keyword id="KW-0678">Repressor</keyword>
<keyword id="KW-0804">Transcription</keyword>
<keyword id="KW-0805">Transcription regulation</keyword>
<keyword id="KW-0862">Zinc</keyword>
<keyword id="KW-0863">Zinc-finger</keyword>
<reference key="1">
    <citation type="journal article" date="2009" name="Nature">
        <title>Evolution of pathogenicity and sexual reproduction in eight Candida genomes.</title>
        <authorList>
            <person name="Butler G."/>
            <person name="Rasmussen M.D."/>
            <person name="Lin M.F."/>
            <person name="Santos M.A.S."/>
            <person name="Sakthikumar S."/>
            <person name="Munro C.A."/>
            <person name="Rheinbay E."/>
            <person name="Grabherr M."/>
            <person name="Forche A."/>
            <person name="Reedy J.L."/>
            <person name="Agrafioti I."/>
            <person name="Arnaud M.B."/>
            <person name="Bates S."/>
            <person name="Brown A.J.P."/>
            <person name="Brunke S."/>
            <person name="Costanzo M.C."/>
            <person name="Fitzpatrick D.A."/>
            <person name="de Groot P.W.J."/>
            <person name="Harris D."/>
            <person name="Hoyer L.L."/>
            <person name="Hube B."/>
            <person name="Klis F.M."/>
            <person name="Kodira C."/>
            <person name="Lennard N."/>
            <person name="Logue M.E."/>
            <person name="Martin R."/>
            <person name="Neiman A.M."/>
            <person name="Nikolaou E."/>
            <person name="Quail M.A."/>
            <person name="Quinn J."/>
            <person name="Santos M.C."/>
            <person name="Schmitzberger F.F."/>
            <person name="Sherlock G."/>
            <person name="Shah P."/>
            <person name="Silverstein K.A.T."/>
            <person name="Skrzypek M.S."/>
            <person name="Soll D."/>
            <person name="Staggs R."/>
            <person name="Stansfield I."/>
            <person name="Stumpf M.P.H."/>
            <person name="Sudbery P.E."/>
            <person name="Srikantha T."/>
            <person name="Zeng Q."/>
            <person name="Berman J."/>
            <person name="Berriman M."/>
            <person name="Heitman J."/>
            <person name="Gow N.A.R."/>
            <person name="Lorenz M.C."/>
            <person name="Birren B.W."/>
            <person name="Kellis M."/>
            <person name="Cuomo C.A."/>
        </authorList>
    </citation>
    <scope>NUCLEOTIDE SEQUENCE [LARGE SCALE GENOMIC DNA]</scope>
    <source>
        <strain>ATCC 6260 / CBS 566 / DSM 6381 / JCM 1539 / NBRC 10279 / NRRL Y-324</strain>
    </source>
</reference>
<comment type="function">
    <text evidence="1">Negative regulator of transcription elongation.</text>
</comment>
<comment type="subcellular location">
    <subcellularLocation>
        <location evidence="3">Nucleus</location>
    </subcellularLocation>
</comment>
<comment type="similarity">
    <text evidence="5">Belongs to the BYE1 family.</text>
</comment>
<evidence type="ECO:0000250" key="1"/>
<evidence type="ECO:0000255" key="2">
    <source>
        <dbReference type="PROSITE-ProRule" id="PRU00146"/>
    </source>
</evidence>
<evidence type="ECO:0000255" key="3">
    <source>
        <dbReference type="PROSITE-ProRule" id="PRU00651"/>
    </source>
</evidence>
<evidence type="ECO:0000256" key="4">
    <source>
        <dbReference type="SAM" id="MobiDB-lite"/>
    </source>
</evidence>
<evidence type="ECO:0000305" key="5"/>
<protein>
    <recommendedName>
        <fullName>Transcription factor BYE1</fullName>
    </recommendedName>
</protein>